<evidence type="ECO:0000255" key="1">
    <source>
        <dbReference type="HAMAP-Rule" id="MF_00111"/>
    </source>
</evidence>
<organism>
    <name type="scientific">Coprothermobacter proteolyticus (strain ATCC 35245 / DSM 5265 / OCM 4 / BT)</name>
    <dbReference type="NCBI Taxonomy" id="309798"/>
    <lineage>
        <taxon>Bacteria</taxon>
        <taxon>Pseudomonadati</taxon>
        <taxon>Coprothermobacterota</taxon>
        <taxon>Coprothermobacteria</taxon>
        <taxon>Coprothermobacterales</taxon>
        <taxon>Coprothermobacteraceae</taxon>
        <taxon>Coprothermobacter</taxon>
    </lineage>
</organism>
<protein>
    <recommendedName>
        <fullName evidence="1">UDP-N-acetylglucosamine 1-carboxyvinyltransferase</fullName>
        <ecNumber evidence="1">2.5.1.7</ecNumber>
    </recommendedName>
    <alternativeName>
        <fullName evidence="1">Enoylpyruvate transferase</fullName>
    </alternativeName>
    <alternativeName>
        <fullName evidence="1">UDP-N-acetylglucosamine enolpyruvyl transferase</fullName>
        <shortName evidence="1">EPT</shortName>
    </alternativeName>
</protein>
<proteinExistence type="inferred from homology"/>
<name>MURA_COPPD</name>
<accession>B5Y8H0</accession>
<sequence>MSVLIIDGGIPLKGKVTAQGCKNSALAILAAAALCEDRVYLTNVPDIGDVKTMMSILRSLGYKVTWGSGLTIKPGVIKNYDLTHTGAGSIRGSLLFLGALLGRLGKVVLPMPGGCNIGTRPIDLHLKGLSLMGASLDIQGGNIVGEAPSGLKGAYVYLDFPSVGATENIMIAGALASGETTIENAAQDQQVVELGKFLMACGVKIHGLGTKVIRIKGKKEIGGVTFRISGDSIEAGTYAIAAAATRGSITVDGVDVTFLRPLLFKLQEAGIEVVVTNGHEVTVLPSPRPKGITIKTMPFPGFPTDLQPLMMSLLATAEGRSVITETVYDGRMGHVSELWKMGANIEVEGNTAIITGVEKLTGAPVVANNLRAGAALVVAGLSAEGRSVVYGMEHVMRGYSNIHQKLRALDAKVELVSDEEAVNIA</sequence>
<gene>
    <name evidence="1" type="primary">murA</name>
    <name type="ordered locus">COPRO5265_0719</name>
</gene>
<feature type="chain" id="PRO_1000094682" description="UDP-N-acetylglucosamine 1-carboxyvinyltransferase">
    <location>
        <begin position="1"/>
        <end position="425"/>
    </location>
</feature>
<feature type="active site" description="Proton donor" evidence="1">
    <location>
        <position position="115"/>
    </location>
</feature>
<feature type="binding site" evidence="1">
    <location>
        <begin position="22"/>
        <end position="23"/>
    </location>
    <ligand>
        <name>phosphoenolpyruvate</name>
        <dbReference type="ChEBI" id="CHEBI:58702"/>
    </ligand>
</feature>
<feature type="binding site" evidence="1">
    <location>
        <position position="91"/>
    </location>
    <ligand>
        <name>UDP-N-acetyl-alpha-D-glucosamine</name>
        <dbReference type="ChEBI" id="CHEBI:57705"/>
    </ligand>
</feature>
<feature type="binding site" evidence="1">
    <location>
        <begin position="120"/>
        <end position="124"/>
    </location>
    <ligand>
        <name>UDP-N-acetyl-alpha-D-glucosamine</name>
        <dbReference type="ChEBI" id="CHEBI:57705"/>
    </ligand>
</feature>
<feature type="binding site" evidence="1">
    <location>
        <position position="305"/>
    </location>
    <ligand>
        <name>UDP-N-acetyl-alpha-D-glucosamine</name>
        <dbReference type="ChEBI" id="CHEBI:57705"/>
    </ligand>
</feature>
<feature type="binding site" evidence="1">
    <location>
        <position position="327"/>
    </location>
    <ligand>
        <name>UDP-N-acetyl-alpha-D-glucosamine</name>
        <dbReference type="ChEBI" id="CHEBI:57705"/>
    </ligand>
</feature>
<feature type="modified residue" description="2-(S-cysteinyl)pyruvic acid O-phosphothioketal" evidence="1">
    <location>
        <position position="115"/>
    </location>
</feature>
<comment type="function">
    <text evidence="1">Cell wall formation. Adds enolpyruvyl to UDP-N-acetylglucosamine.</text>
</comment>
<comment type="catalytic activity">
    <reaction evidence="1">
        <text>phosphoenolpyruvate + UDP-N-acetyl-alpha-D-glucosamine = UDP-N-acetyl-3-O-(1-carboxyvinyl)-alpha-D-glucosamine + phosphate</text>
        <dbReference type="Rhea" id="RHEA:18681"/>
        <dbReference type="ChEBI" id="CHEBI:43474"/>
        <dbReference type="ChEBI" id="CHEBI:57705"/>
        <dbReference type="ChEBI" id="CHEBI:58702"/>
        <dbReference type="ChEBI" id="CHEBI:68483"/>
        <dbReference type="EC" id="2.5.1.7"/>
    </reaction>
</comment>
<comment type="pathway">
    <text evidence="1">Cell wall biogenesis; peptidoglycan biosynthesis.</text>
</comment>
<comment type="subcellular location">
    <subcellularLocation>
        <location evidence="1">Cytoplasm</location>
    </subcellularLocation>
</comment>
<comment type="similarity">
    <text evidence="1">Belongs to the EPSP synthase family. MurA subfamily.</text>
</comment>
<keyword id="KW-0131">Cell cycle</keyword>
<keyword id="KW-0132">Cell division</keyword>
<keyword id="KW-0133">Cell shape</keyword>
<keyword id="KW-0961">Cell wall biogenesis/degradation</keyword>
<keyword id="KW-0963">Cytoplasm</keyword>
<keyword id="KW-0573">Peptidoglycan synthesis</keyword>
<keyword id="KW-0670">Pyruvate</keyword>
<keyword id="KW-1185">Reference proteome</keyword>
<keyword id="KW-0808">Transferase</keyword>
<dbReference type="EC" id="2.5.1.7" evidence="1"/>
<dbReference type="EMBL" id="CP001145">
    <property type="protein sequence ID" value="ACI18138.1"/>
    <property type="molecule type" value="Genomic_DNA"/>
</dbReference>
<dbReference type="RefSeq" id="WP_012544788.1">
    <property type="nucleotide sequence ID" value="NC_011295.1"/>
</dbReference>
<dbReference type="SMR" id="B5Y8H0"/>
<dbReference type="STRING" id="309798.COPRO5265_0719"/>
<dbReference type="KEGG" id="cpo:COPRO5265_0719"/>
<dbReference type="eggNOG" id="COG0766">
    <property type="taxonomic scope" value="Bacteria"/>
</dbReference>
<dbReference type="HOGENOM" id="CLU_027387_0_0_9"/>
<dbReference type="OrthoDB" id="9803760at2"/>
<dbReference type="UniPathway" id="UPA00219"/>
<dbReference type="Proteomes" id="UP000001732">
    <property type="component" value="Chromosome"/>
</dbReference>
<dbReference type="GO" id="GO:0005737">
    <property type="term" value="C:cytoplasm"/>
    <property type="evidence" value="ECO:0007669"/>
    <property type="project" value="UniProtKB-SubCell"/>
</dbReference>
<dbReference type="GO" id="GO:0008760">
    <property type="term" value="F:UDP-N-acetylglucosamine 1-carboxyvinyltransferase activity"/>
    <property type="evidence" value="ECO:0007669"/>
    <property type="project" value="UniProtKB-UniRule"/>
</dbReference>
<dbReference type="GO" id="GO:0051301">
    <property type="term" value="P:cell division"/>
    <property type="evidence" value="ECO:0007669"/>
    <property type="project" value="UniProtKB-KW"/>
</dbReference>
<dbReference type="GO" id="GO:0071555">
    <property type="term" value="P:cell wall organization"/>
    <property type="evidence" value="ECO:0007669"/>
    <property type="project" value="UniProtKB-KW"/>
</dbReference>
<dbReference type="GO" id="GO:0009252">
    <property type="term" value="P:peptidoglycan biosynthetic process"/>
    <property type="evidence" value="ECO:0007669"/>
    <property type="project" value="UniProtKB-UniRule"/>
</dbReference>
<dbReference type="GO" id="GO:0008360">
    <property type="term" value="P:regulation of cell shape"/>
    <property type="evidence" value="ECO:0007669"/>
    <property type="project" value="UniProtKB-KW"/>
</dbReference>
<dbReference type="GO" id="GO:0019277">
    <property type="term" value="P:UDP-N-acetylgalactosamine biosynthetic process"/>
    <property type="evidence" value="ECO:0007669"/>
    <property type="project" value="InterPro"/>
</dbReference>
<dbReference type="CDD" id="cd01555">
    <property type="entry name" value="UdpNAET"/>
    <property type="match status" value="1"/>
</dbReference>
<dbReference type="Gene3D" id="3.65.10.10">
    <property type="entry name" value="Enolpyruvate transferase domain"/>
    <property type="match status" value="2"/>
</dbReference>
<dbReference type="HAMAP" id="MF_00111">
    <property type="entry name" value="MurA"/>
    <property type="match status" value="1"/>
</dbReference>
<dbReference type="InterPro" id="IPR001986">
    <property type="entry name" value="Enolpyruvate_Tfrase_dom"/>
</dbReference>
<dbReference type="InterPro" id="IPR036968">
    <property type="entry name" value="Enolpyruvate_Tfrase_sf"/>
</dbReference>
<dbReference type="InterPro" id="IPR050068">
    <property type="entry name" value="MurA_subfamily"/>
</dbReference>
<dbReference type="InterPro" id="IPR013792">
    <property type="entry name" value="RNA3'P_cycl/enolpyr_Trfase_a/b"/>
</dbReference>
<dbReference type="InterPro" id="IPR005750">
    <property type="entry name" value="UDP_GlcNAc_COvinyl_MurA"/>
</dbReference>
<dbReference type="NCBIfam" id="TIGR01072">
    <property type="entry name" value="murA"/>
    <property type="match status" value="1"/>
</dbReference>
<dbReference type="NCBIfam" id="NF006873">
    <property type="entry name" value="PRK09369.1"/>
    <property type="match status" value="1"/>
</dbReference>
<dbReference type="PANTHER" id="PTHR43783">
    <property type="entry name" value="UDP-N-ACETYLGLUCOSAMINE 1-CARBOXYVINYLTRANSFERASE"/>
    <property type="match status" value="1"/>
</dbReference>
<dbReference type="PANTHER" id="PTHR43783:SF1">
    <property type="entry name" value="UDP-N-ACETYLGLUCOSAMINE 1-CARBOXYVINYLTRANSFERASE"/>
    <property type="match status" value="1"/>
</dbReference>
<dbReference type="Pfam" id="PF00275">
    <property type="entry name" value="EPSP_synthase"/>
    <property type="match status" value="1"/>
</dbReference>
<dbReference type="SUPFAM" id="SSF55205">
    <property type="entry name" value="EPT/RTPC-like"/>
    <property type="match status" value="1"/>
</dbReference>
<reference key="1">
    <citation type="submission" date="2008-08" db="EMBL/GenBank/DDBJ databases">
        <title>The complete genome sequence of Coprothermobacter proteolyticus strain ATCC 5245 / DSM 5265 / BT.</title>
        <authorList>
            <person name="Dodson R.J."/>
            <person name="Durkin A.S."/>
            <person name="Wu M."/>
            <person name="Eisen J."/>
            <person name="Sutton G."/>
        </authorList>
    </citation>
    <scope>NUCLEOTIDE SEQUENCE [LARGE SCALE GENOMIC DNA]</scope>
    <source>
        <strain>ATCC 35245 / DSM 5265 / OCM 4 / BT</strain>
    </source>
</reference>